<protein>
    <recommendedName>
        <fullName>Dof zinc finger protein DOF5.4</fullName>
        <shortName>AtDOF5.4</shortName>
    </recommendedName>
    <alternativeName>
        <fullName>OBF-binding protein 4</fullName>
    </alternativeName>
</protein>
<gene>
    <name type="primary">DOF5.4</name>
    <name type="synonym">OBP4</name>
    <name type="ordered locus">At5g60850</name>
    <name type="ORF">MAE1.9</name>
</gene>
<proteinExistence type="evidence at transcript level"/>
<sequence length="307" mass="32741">MQDIHDFSMNGVGGGGGGGGRFFGGGIGGGGGGDRRMRAHQNNILNHHQSLKCPRCNSLNTKFCYYNNYNLSQPRHFCKNCRRYWTKGGVLRNVPVGGGCRKAKRSKTKQVPSSSSADKPTTTQDDHHVEEKSSTGSHSSSESSSLTASNSTTVAAVSVTAAAEVASSVIPGFDMPNMKIYGNGIEWSTLLGQGSSAGGVFSEIGGFPAVSAIETTPFGFGGKFVNQDDHLKLEGETVQQQQFGDRTAQVEFQGRSSDPNMGFEPLDWGSGGGDQTLFDLTSTVDHAYWSQSQWTSSDQDQSGLYLP</sequence>
<feature type="chain" id="PRO_0000074294" description="Dof zinc finger protein DOF5.4">
    <location>
        <begin position="1"/>
        <end position="307"/>
    </location>
</feature>
<feature type="zinc finger region" description="Dof-type" evidence="2">
    <location>
        <begin position="51"/>
        <end position="105"/>
    </location>
</feature>
<feature type="region of interest" description="Disordered" evidence="3">
    <location>
        <begin position="96"/>
        <end position="147"/>
    </location>
</feature>
<feature type="compositionally biased region" description="Polar residues" evidence="3">
    <location>
        <begin position="109"/>
        <end position="123"/>
    </location>
</feature>
<feature type="compositionally biased region" description="Basic and acidic residues" evidence="3">
    <location>
        <begin position="124"/>
        <end position="133"/>
    </location>
</feature>
<feature type="compositionally biased region" description="Low complexity" evidence="3">
    <location>
        <begin position="134"/>
        <end position="147"/>
    </location>
</feature>
<feature type="binding site" evidence="2">
    <location>
        <position position="53"/>
    </location>
    <ligand>
        <name>Zn(2+)</name>
        <dbReference type="ChEBI" id="CHEBI:29105"/>
    </ligand>
</feature>
<feature type="binding site" evidence="2">
    <location>
        <position position="56"/>
    </location>
    <ligand>
        <name>Zn(2+)</name>
        <dbReference type="ChEBI" id="CHEBI:29105"/>
    </ligand>
</feature>
<feature type="binding site" evidence="2">
    <location>
        <position position="78"/>
    </location>
    <ligand>
        <name>Zn(2+)</name>
        <dbReference type="ChEBI" id="CHEBI:29105"/>
    </ligand>
</feature>
<feature type="binding site" evidence="2">
    <location>
        <position position="81"/>
    </location>
    <ligand>
        <name>Zn(2+)</name>
        <dbReference type="ChEBI" id="CHEBI:29105"/>
    </ligand>
</feature>
<feature type="sequence conflict" description="In Ref. 1; AAD38987." evidence="4" ref="1">
    <location>
        <position position="33"/>
    </location>
</feature>
<feature type="sequence conflict" description="In Ref. 1; AAD38987." evidence="4" ref="1">
    <original>GC</original>
    <variation>RS</variation>
    <location>
        <begin position="99"/>
        <end position="100"/>
    </location>
</feature>
<feature type="sequence conflict" description="In Ref. 1; AAD38987." evidence="4" ref="1">
    <original>A</original>
    <variation>P</variation>
    <location>
        <position position="156"/>
    </location>
</feature>
<accession>Q8LDR0</accession>
<accession>Q9FJH1</accession>
<accession>Q9XGU5</accession>
<organism>
    <name type="scientific">Arabidopsis thaliana</name>
    <name type="common">Mouse-ear cress</name>
    <dbReference type="NCBI Taxonomy" id="3702"/>
    <lineage>
        <taxon>Eukaryota</taxon>
        <taxon>Viridiplantae</taxon>
        <taxon>Streptophyta</taxon>
        <taxon>Embryophyta</taxon>
        <taxon>Tracheophyta</taxon>
        <taxon>Spermatophyta</taxon>
        <taxon>Magnoliopsida</taxon>
        <taxon>eudicotyledons</taxon>
        <taxon>Gunneridae</taxon>
        <taxon>Pentapetalae</taxon>
        <taxon>rosids</taxon>
        <taxon>malvids</taxon>
        <taxon>Brassicales</taxon>
        <taxon>Brassicaceae</taxon>
        <taxon>Camelineae</taxon>
        <taxon>Arabidopsis</taxon>
    </lineage>
</organism>
<evidence type="ECO:0000250" key="1"/>
<evidence type="ECO:0000255" key="2">
    <source>
        <dbReference type="PROSITE-ProRule" id="PRU00071"/>
    </source>
</evidence>
<evidence type="ECO:0000256" key="3">
    <source>
        <dbReference type="SAM" id="MobiDB-lite"/>
    </source>
</evidence>
<evidence type="ECO:0000305" key="4"/>
<comment type="function">
    <text evidence="1">Transcription factor that binds specifically to a 5'-AA[AG]G-3' consensus core sequence. Enhances the DNA binding of OBF transcription factors to OCS elements (By similarity).</text>
</comment>
<comment type="subcellular location">
    <subcellularLocation>
        <location evidence="4">Nucleus</location>
    </subcellularLocation>
</comment>
<comment type="sequence caution" evidence="4">
    <conflict type="frameshift">
        <sequence resource="EMBL-CDS" id="AAD38987"/>
    </conflict>
</comment>
<comment type="sequence caution" evidence="4">
    <conflict type="erroneous initiation">
        <sequence resource="EMBL-CDS" id="AAM63069"/>
    </conflict>
</comment>
<reference key="1">
    <citation type="journal article" date="2000" name="Plant J.">
        <title>Characterization of salicylic acid-responsive, Arabidopsis Dof domain proteins: overexpression of OBP3 leads to growth defects.</title>
        <authorList>
            <person name="Kang H.-G."/>
            <person name="Singh K.B."/>
        </authorList>
    </citation>
    <scope>NUCLEOTIDE SEQUENCE [MRNA]</scope>
    <source>
        <strain>cv. Columbia</strain>
    </source>
</reference>
<reference key="2">
    <citation type="journal article" date="1998" name="DNA Res.">
        <title>Structural analysis of Arabidopsis thaliana chromosome 5. VII. Sequence features of the regions of 1,013,767 bp covered by sixteen physically assigned P1 and TAC clones.</title>
        <authorList>
            <person name="Nakamura Y."/>
            <person name="Sato S."/>
            <person name="Asamizu E."/>
            <person name="Kaneko T."/>
            <person name="Kotani H."/>
            <person name="Miyajima N."/>
            <person name="Tabata S."/>
        </authorList>
    </citation>
    <scope>NUCLEOTIDE SEQUENCE [LARGE SCALE GENOMIC DNA]</scope>
    <source>
        <strain>cv. Columbia</strain>
    </source>
</reference>
<reference key="3">
    <citation type="journal article" date="2017" name="Plant J.">
        <title>Araport11: a complete reannotation of the Arabidopsis thaliana reference genome.</title>
        <authorList>
            <person name="Cheng C.Y."/>
            <person name="Krishnakumar V."/>
            <person name="Chan A.P."/>
            <person name="Thibaud-Nissen F."/>
            <person name="Schobel S."/>
            <person name="Town C.D."/>
        </authorList>
    </citation>
    <scope>GENOME REANNOTATION</scope>
    <source>
        <strain>cv. Columbia</strain>
    </source>
</reference>
<reference key="4">
    <citation type="journal article" date="2003" name="Science">
        <title>Empirical analysis of transcriptional activity in the Arabidopsis genome.</title>
        <authorList>
            <person name="Yamada K."/>
            <person name="Lim J."/>
            <person name="Dale J.M."/>
            <person name="Chen H."/>
            <person name="Shinn P."/>
            <person name="Palm C.J."/>
            <person name="Southwick A.M."/>
            <person name="Wu H.C."/>
            <person name="Kim C.J."/>
            <person name="Nguyen M."/>
            <person name="Pham P.K."/>
            <person name="Cheuk R.F."/>
            <person name="Karlin-Newmann G."/>
            <person name="Liu S.X."/>
            <person name="Lam B."/>
            <person name="Sakano H."/>
            <person name="Wu T."/>
            <person name="Yu G."/>
            <person name="Miranda M."/>
            <person name="Quach H.L."/>
            <person name="Tripp M."/>
            <person name="Chang C.H."/>
            <person name="Lee J.M."/>
            <person name="Toriumi M.J."/>
            <person name="Chan M.M."/>
            <person name="Tang C.C."/>
            <person name="Onodera C.S."/>
            <person name="Deng J.M."/>
            <person name="Akiyama K."/>
            <person name="Ansari Y."/>
            <person name="Arakawa T."/>
            <person name="Banh J."/>
            <person name="Banno F."/>
            <person name="Bowser L."/>
            <person name="Brooks S.Y."/>
            <person name="Carninci P."/>
            <person name="Chao Q."/>
            <person name="Choy N."/>
            <person name="Enju A."/>
            <person name="Goldsmith A.D."/>
            <person name="Gurjal M."/>
            <person name="Hansen N.F."/>
            <person name="Hayashizaki Y."/>
            <person name="Johnson-Hopson C."/>
            <person name="Hsuan V.W."/>
            <person name="Iida K."/>
            <person name="Karnes M."/>
            <person name="Khan S."/>
            <person name="Koesema E."/>
            <person name="Ishida J."/>
            <person name="Jiang P.X."/>
            <person name="Jones T."/>
            <person name="Kawai J."/>
            <person name="Kamiya A."/>
            <person name="Meyers C."/>
            <person name="Nakajima M."/>
            <person name="Narusaka M."/>
            <person name="Seki M."/>
            <person name="Sakurai T."/>
            <person name="Satou M."/>
            <person name="Tamse R."/>
            <person name="Vaysberg M."/>
            <person name="Wallender E.K."/>
            <person name="Wong C."/>
            <person name="Yamamura Y."/>
            <person name="Yuan S."/>
            <person name="Shinozaki K."/>
            <person name="Davis R.W."/>
            <person name="Theologis A."/>
            <person name="Ecker J.R."/>
        </authorList>
    </citation>
    <scope>NUCLEOTIDE SEQUENCE [LARGE SCALE MRNA]</scope>
    <source>
        <strain>cv. Columbia</strain>
    </source>
</reference>
<reference key="5">
    <citation type="submission" date="2002-03" db="EMBL/GenBank/DDBJ databases">
        <title>Full-length cDNA from Arabidopsis thaliana.</title>
        <authorList>
            <person name="Brover V.V."/>
            <person name="Troukhan M.E."/>
            <person name="Alexandrov N.A."/>
            <person name="Lu Y.-P."/>
            <person name="Flavell R.B."/>
            <person name="Feldmann K.A."/>
        </authorList>
    </citation>
    <scope>NUCLEOTIDE SEQUENCE [LARGE SCALE MRNA]</scope>
</reference>
<reference key="6">
    <citation type="journal article" date="2002" name="Trends Plant Sci.">
        <title>The Dof family of plant transcription factors.</title>
        <authorList>
            <person name="Yanagisawa S."/>
        </authorList>
    </citation>
    <scope>GENE FAMILY</scope>
    <scope>NOMENCLATURE</scope>
</reference>
<name>DOF54_ARATH</name>
<dbReference type="EMBL" id="AF155817">
    <property type="protein sequence ID" value="AAD38987.1"/>
    <property type="status" value="ALT_FRAME"/>
    <property type="molecule type" value="mRNA"/>
</dbReference>
<dbReference type="EMBL" id="AB015472">
    <property type="protein sequence ID" value="BAB10105.1"/>
    <property type="molecule type" value="Genomic_DNA"/>
</dbReference>
<dbReference type="EMBL" id="CP002688">
    <property type="protein sequence ID" value="AED97386.1"/>
    <property type="molecule type" value="Genomic_DNA"/>
</dbReference>
<dbReference type="EMBL" id="AY056413">
    <property type="protein sequence ID" value="AAL08269.1"/>
    <property type="molecule type" value="mRNA"/>
</dbReference>
<dbReference type="EMBL" id="AY081709">
    <property type="protein sequence ID" value="AAL87362.1"/>
    <property type="molecule type" value="mRNA"/>
</dbReference>
<dbReference type="EMBL" id="AY085856">
    <property type="protein sequence ID" value="AAM63069.1"/>
    <property type="status" value="ALT_INIT"/>
    <property type="molecule type" value="mRNA"/>
</dbReference>
<dbReference type="RefSeq" id="NP_200893.1">
    <property type="nucleotide sequence ID" value="NM_125478.4"/>
</dbReference>
<dbReference type="FunCoup" id="Q8LDR0">
    <property type="interactions" value="119"/>
</dbReference>
<dbReference type="STRING" id="3702.Q8LDR0"/>
<dbReference type="GlyGen" id="Q8LDR0">
    <property type="glycosylation" value="2 sites, 1 O-linked glycan (2 sites)"/>
</dbReference>
<dbReference type="PaxDb" id="3702-AT5G60850.1"/>
<dbReference type="ProteomicsDB" id="222126"/>
<dbReference type="EnsemblPlants" id="AT5G60850.1">
    <property type="protein sequence ID" value="AT5G60850.1"/>
    <property type="gene ID" value="AT5G60850"/>
</dbReference>
<dbReference type="GeneID" id="836206"/>
<dbReference type="Gramene" id="AT5G60850.1">
    <property type="protein sequence ID" value="AT5G60850.1"/>
    <property type="gene ID" value="AT5G60850"/>
</dbReference>
<dbReference type="KEGG" id="ath:AT5G60850"/>
<dbReference type="Araport" id="AT5G60850"/>
<dbReference type="TAIR" id="AT5G60850">
    <property type="gene designation" value="OBP4"/>
</dbReference>
<dbReference type="eggNOG" id="ENOG502QRBR">
    <property type="taxonomic scope" value="Eukaryota"/>
</dbReference>
<dbReference type="HOGENOM" id="CLU_075415_0_0_1"/>
<dbReference type="InParanoid" id="Q8LDR0"/>
<dbReference type="OMA" id="QWTSSDQ"/>
<dbReference type="OrthoDB" id="1927254at2759"/>
<dbReference type="PhylomeDB" id="Q8LDR0"/>
<dbReference type="PRO" id="PR:Q8LDR0"/>
<dbReference type="Proteomes" id="UP000006548">
    <property type="component" value="Chromosome 5"/>
</dbReference>
<dbReference type="ExpressionAtlas" id="Q8LDR0">
    <property type="expression patterns" value="baseline and differential"/>
</dbReference>
<dbReference type="GO" id="GO:0005634">
    <property type="term" value="C:nucleus"/>
    <property type="evidence" value="ECO:0007669"/>
    <property type="project" value="UniProtKB-SubCell"/>
</dbReference>
<dbReference type="GO" id="GO:0003700">
    <property type="term" value="F:DNA-binding transcription factor activity"/>
    <property type="evidence" value="ECO:0000250"/>
    <property type="project" value="TAIR"/>
</dbReference>
<dbReference type="GO" id="GO:0000976">
    <property type="term" value="F:transcription cis-regulatory region binding"/>
    <property type="evidence" value="ECO:0000353"/>
    <property type="project" value="TAIR"/>
</dbReference>
<dbReference type="GO" id="GO:0008270">
    <property type="term" value="F:zinc ion binding"/>
    <property type="evidence" value="ECO:0007669"/>
    <property type="project" value="UniProtKB-KW"/>
</dbReference>
<dbReference type="GO" id="GO:0006355">
    <property type="term" value="P:regulation of DNA-templated transcription"/>
    <property type="evidence" value="ECO:0000304"/>
    <property type="project" value="TAIR"/>
</dbReference>
<dbReference type="InterPro" id="IPR045174">
    <property type="entry name" value="Dof"/>
</dbReference>
<dbReference type="InterPro" id="IPR003851">
    <property type="entry name" value="Znf_Dof"/>
</dbReference>
<dbReference type="PANTHER" id="PTHR31992">
    <property type="entry name" value="DOF ZINC FINGER PROTEIN DOF1.4-RELATED"/>
    <property type="match status" value="1"/>
</dbReference>
<dbReference type="PANTHER" id="PTHR31992:SF314">
    <property type="entry name" value="DOF ZINC FINGER PROTEIN DOF5.4"/>
    <property type="match status" value="1"/>
</dbReference>
<dbReference type="Pfam" id="PF02701">
    <property type="entry name" value="Zn_ribbon_Dof"/>
    <property type="match status" value="1"/>
</dbReference>
<dbReference type="PROSITE" id="PS01361">
    <property type="entry name" value="ZF_DOF_1"/>
    <property type="match status" value="1"/>
</dbReference>
<dbReference type="PROSITE" id="PS50884">
    <property type="entry name" value="ZF_DOF_2"/>
    <property type="match status" value="1"/>
</dbReference>
<keyword id="KW-0238">DNA-binding</keyword>
<keyword id="KW-0479">Metal-binding</keyword>
<keyword id="KW-0539">Nucleus</keyword>
<keyword id="KW-1185">Reference proteome</keyword>
<keyword id="KW-0804">Transcription</keyword>
<keyword id="KW-0805">Transcription regulation</keyword>
<keyword id="KW-0862">Zinc</keyword>
<keyword id="KW-0863">Zinc-finger</keyword>